<sequence length="131" mass="15187">MRHYEIVFMVHPDQSEQVPGMIERYTAAITGAEGKIHRLEDWGRRQLAYPINKLHKAHYVLMNVEAPQEVIDELETTFRFNDAVIRSMVMRTKHAVTEASPMVKAKDERRERRDDFANETADDAEAGDSEE</sequence>
<protein>
    <recommendedName>
        <fullName evidence="1">Small ribosomal subunit protein bS6</fullName>
    </recommendedName>
    <alternativeName>
        <fullName evidence="3">30S ribosomal protein S6</fullName>
    </alternativeName>
</protein>
<dbReference type="EMBL" id="CP000243">
    <property type="protein sequence ID" value="ABE10204.1"/>
    <property type="molecule type" value="Genomic_DNA"/>
</dbReference>
<dbReference type="RefSeq" id="WP_001216676.1">
    <property type="nucleotide sequence ID" value="NZ_CP064825.1"/>
</dbReference>
<dbReference type="SMR" id="Q1R360"/>
<dbReference type="GeneID" id="93777623"/>
<dbReference type="KEGG" id="eci:UTI89_C4800"/>
<dbReference type="HOGENOM" id="CLU_113441_6_1_6"/>
<dbReference type="Proteomes" id="UP000001952">
    <property type="component" value="Chromosome"/>
</dbReference>
<dbReference type="GO" id="GO:0022627">
    <property type="term" value="C:cytosolic small ribosomal subunit"/>
    <property type="evidence" value="ECO:0007669"/>
    <property type="project" value="TreeGrafter"/>
</dbReference>
<dbReference type="GO" id="GO:0070181">
    <property type="term" value="F:small ribosomal subunit rRNA binding"/>
    <property type="evidence" value="ECO:0007669"/>
    <property type="project" value="TreeGrafter"/>
</dbReference>
<dbReference type="GO" id="GO:0003735">
    <property type="term" value="F:structural constituent of ribosome"/>
    <property type="evidence" value="ECO:0007669"/>
    <property type="project" value="InterPro"/>
</dbReference>
<dbReference type="GO" id="GO:0006412">
    <property type="term" value="P:translation"/>
    <property type="evidence" value="ECO:0007669"/>
    <property type="project" value="UniProtKB-UniRule"/>
</dbReference>
<dbReference type="CDD" id="cd00473">
    <property type="entry name" value="bS6"/>
    <property type="match status" value="1"/>
</dbReference>
<dbReference type="FunFam" id="3.30.70.60:FF:000003">
    <property type="entry name" value="30S ribosomal protein S6"/>
    <property type="match status" value="1"/>
</dbReference>
<dbReference type="Gene3D" id="3.30.70.60">
    <property type="match status" value="1"/>
</dbReference>
<dbReference type="HAMAP" id="MF_00360">
    <property type="entry name" value="Ribosomal_bS6"/>
    <property type="match status" value="1"/>
</dbReference>
<dbReference type="InterPro" id="IPR000529">
    <property type="entry name" value="Ribosomal_bS6"/>
</dbReference>
<dbReference type="InterPro" id="IPR020815">
    <property type="entry name" value="Ribosomal_bS6_CS"/>
</dbReference>
<dbReference type="InterPro" id="IPR035980">
    <property type="entry name" value="Ribosomal_bS6_sf"/>
</dbReference>
<dbReference type="InterPro" id="IPR020814">
    <property type="entry name" value="Ribosomal_S6_plastid/chlpt"/>
</dbReference>
<dbReference type="InterPro" id="IPR014717">
    <property type="entry name" value="Transl_elong_EF1B/ribsomal_bS6"/>
</dbReference>
<dbReference type="NCBIfam" id="TIGR00166">
    <property type="entry name" value="S6"/>
    <property type="match status" value="1"/>
</dbReference>
<dbReference type="PANTHER" id="PTHR21011">
    <property type="entry name" value="MITOCHONDRIAL 28S RIBOSOMAL PROTEIN S6"/>
    <property type="match status" value="1"/>
</dbReference>
<dbReference type="PANTHER" id="PTHR21011:SF1">
    <property type="entry name" value="SMALL RIBOSOMAL SUBUNIT PROTEIN BS6M"/>
    <property type="match status" value="1"/>
</dbReference>
<dbReference type="Pfam" id="PF01250">
    <property type="entry name" value="Ribosomal_S6"/>
    <property type="match status" value="1"/>
</dbReference>
<dbReference type="SUPFAM" id="SSF54995">
    <property type="entry name" value="Ribosomal protein S6"/>
    <property type="match status" value="1"/>
</dbReference>
<dbReference type="PROSITE" id="PS01048">
    <property type="entry name" value="RIBOSOMAL_S6"/>
    <property type="match status" value="1"/>
</dbReference>
<name>RS6_ECOUT</name>
<keyword id="KW-0007">Acetylation</keyword>
<keyword id="KW-0687">Ribonucleoprotein</keyword>
<keyword id="KW-0689">Ribosomal protein</keyword>
<keyword id="KW-0694">RNA-binding</keyword>
<keyword id="KW-0699">rRNA-binding</keyword>
<comment type="function">
    <text evidence="1">Binds together with bS18 to 16S ribosomal RNA.</text>
</comment>
<comment type="similarity">
    <text evidence="1">Belongs to the bacterial ribosomal protein bS6 family.</text>
</comment>
<gene>
    <name evidence="1" type="primary">rpsF</name>
    <name type="ordered locus">UTI89_C4800</name>
</gene>
<proteinExistence type="inferred from homology"/>
<reference key="1">
    <citation type="journal article" date="2006" name="Proc. Natl. Acad. Sci. U.S.A.">
        <title>Identification of genes subject to positive selection in uropathogenic strains of Escherichia coli: a comparative genomics approach.</title>
        <authorList>
            <person name="Chen S.L."/>
            <person name="Hung C.-S."/>
            <person name="Xu J."/>
            <person name="Reigstad C.S."/>
            <person name="Magrini V."/>
            <person name="Sabo A."/>
            <person name="Blasiar D."/>
            <person name="Bieri T."/>
            <person name="Meyer R.R."/>
            <person name="Ozersky P."/>
            <person name="Armstrong J.R."/>
            <person name="Fulton R.S."/>
            <person name="Latreille J.P."/>
            <person name="Spieth J."/>
            <person name="Hooton T.M."/>
            <person name="Mardis E.R."/>
            <person name="Hultgren S.J."/>
            <person name="Gordon J.I."/>
        </authorList>
    </citation>
    <scope>NUCLEOTIDE SEQUENCE [LARGE SCALE GENOMIC DNA]</scope>
    <source>
        <strain>UTI89 / UPEC</strain>
    </source>
</reference>
<accession>Q1R360</accession>
<evidence type="ECO:0000255" key="1">
    <source>
        <dbReference type="HAMAP-Rule" id="MF_00360"/>
    </source>
</evidence>
<evidence type="ECO:0000256" key="2">
    <source>
        <dbReference type="SAM" id="MobiDB-lite"/>
    </source>
</evidence>
<evidence type="ECO:0000305" key="3"/>
<organism>
    <name type="scientific">Escherichia coli (strain UTI89 / UPEC)</name>
    <dbReference type="NCBI Taxonomy" id="364106"/>
    <lineage>
        <taxon>Bacteria</taxon>
        <taxon>Pseudomonadati</taxon>
        <taxon>Pseudomonadota</taxon>
        <taxon>Gammaproteobacteria</taxon>
        <taxon>Enterobacterales</taxon>
        <taxon>Enterobacteriaceae</taxon>
        <taxon>Escherichia</taxon>
    </lineage>
</organism>
<feature type="chain" id="PRO_1000005259" description="Small ribosomal subunit protein bS6">
    <location>
        <begin position="1"/>
        <end position="131"/>
    </location>
</feature>
<feature type="region of interest" description="Disordered" evidence="2">
    <location>
        <begin position="98"/>
        <end position="131"/>
    </location>
</feature>
<feature type="compositionally biased region" description="Basic and acidic residues" evidence="2">
    <location>
        <begin position="104"/>
        <end position="116"/>
    </location>
</feature>
<feature type="compositionally biased region" description="Acidic residues" evidence="2">
    <location>
        <begin position="120"/>
        <end position="131"/>
    </location>
</feature>
<feature type="modified residue" description="N6-acetyllysine" evidence="1">
    <location>
        <position position="93"/>
    </location>
</feature>